<reference key="1">
    <citation type="journal article" date="2002" name="Proc. Natl. Acad. Sci. U.S.A.">
        <title>Complete genome sequence of Clostridium perfringens, an anaerobic flesh-eater.</title>
        <authorList>
            <person name="Shimizu T."/>
            <person name="Ohtani K."/>
            <person name="Hirakawa H."/>
            <person name="Ohshima K."/>
            <person name="Yamashita A."/>
            <person name="Shiba T."/>
            <person name="Ogasawara N."/>
            <person name="Hattori M."/>
            <person name="Kuhara S."/>
            <person name="Hayashi H."/>
        </authorList>
    </citation>
    <scope>NUCLEOTIDE SEQUENCE [LARGE SCALE GENOMIC DNA]</scope>
    <source>
        <strain>13 / Type A</strain>
    </source>
</reference>
<comment type="function">
    <text evidence="2">Synthesizes glutathione from L-glutamate and L-cysteine via gamma-L-glutamyl-L-cysteine.</text>
</comment>
<comment type="catalytic activity">
    <reaction evidence="2">
        <text>L-cysteine + L-glutamate + ATP = gamma-L-glutamyl-L-cysteine + ADP + phosphate + H(+)</text>
        <dbReference type="Rhea" id="RHEA:13285"/>
        <dbReference type="ChEBI" id="CHEBI:15378"/>
        <dbReference type="ChEBI" id="CHEBI:29985"/>
        <dbReference type="ChEBI" id="CHEBI:30616"/>
        <dbReference type="ChEBI" id="CHEBI:35235"/>
        <dbReference type="ChEBI" id="CHEBI:43474"/>
        <dbReference type="ChEBI" id="CHEBI:58173"/>
        <dbReference type="ChEBI" id="CHEBI:456216"/>
        <dbReference type="EC" id="6.3.2.2"/>
    </reaction>
</comment>
<comment type="catalytic activity">
    <reaction evidence="2">
        <text>gamma-L-glutamyl-L-cysteine + glycine + ATP = glutathione + ADP + phosphate + H(+)</text>
        <dbReference type="Rhea" id="RHEA:13557"/>
        <dbReference type="ChEBI" id="CHEBI:15378"/>
        <dbReference type="ChEBI" id="CHEBI:30616"/>
        <dbReference type="ChEBI" id="CHEBI:43474"/>
        <dbReference type="ChEBI" id="CHEBI:57305"/>
        <dbReference type="ChEBI" id="CHEBI:57925"/>
        <dbReference type="ChEBI" id="CHEBI:58173"/>
        <dbReference type="ChEBI" id="CHEBI:456216"/>
        <dbReference type="EC" id="6.3.2.3"/>
    </reaction>
</comment>
<comment type="cofactor">
    <cofactor evidence="1">
        <name>Mg(2+)</name>
        <dbReference type="ChEBI" id="CHEBI:18420"/>
    </cofactor>
    <cofactor evidence="1">
        <name>Mn(2+)</name>
        <dbReference type="ChEBI" id="CHEBI:29035"/>
    </cofactor>
    <text evidence="1">Binds 2 magnesium or manganese ions per subunit.</text>
</comment>
<comment type="pathway">
    <text evidence="2">Sulfur metabolism; glutathione biosynthesis; glutathione from L-cysteine and L-glutamate: step 1/2.</text>
</comment>
<comment type="pathway">
    <text evidence="2">Sulfur metabolism; glutathione biosynthesis; glutathione from L-cysteine and L-glutamate: step 2/2.</text>
</comment>
<comment type="subunit">
    <text evidence="2">Monomer.</text>
</comment>
<comment type="similarity">
    <text evidence="2">In the N-terminal section; belongs to the glutamate--cysteine ligase type 1 family. Type 2 subfamily.</text>
</comment>
<protein>
    <recommendedName>
        <fullName evidence="2">Glutathione biosynthesis bifunctional protein GshAB</fullName>
    </recommendedName>
    <alternativeName>
        <fullName evidence="2">Gamma-GCS-GS</fullName>
        <shortName evidence="2">GCS-GS</shortName>
    </alternativeName>
    <domain>
        <recommendedName>
            <fullName evidence="2">Glutamate--cysteine ligase</fullName>
            <ecNumber evidence="2">6.3.2.2</ecNumber>
        </recommendedName>
        <alternativeName>
            <fullName evidence="2">Gamma-ECS</fullName>
            <shortName evidence="2">GCS</shortName>
        </alternativeName>
        <alternativeName>
            <fullName evidence="2">Gamma-glutamylcysteine synthetase</fullName>
        </alternativeName>
    </domain>
    <domain>
        <recommendedName>
            <fullName evidence="2">Glutathione synthetase</fullName>
            <ecNumber evidence="2">6.3.2.3</ecNumber>
        </recommendedName>
        <alternativeName>
            <fullName evidence="2">GSH synthetase</fullName>
            <shortName evidence="2">GS</shortName>
            <shortName evidence="2">GSH-S</shortName>
            <shortName evidence="2">GSHase</shortName>
        </alternativeName>
        <alternativeName>
            <fullName evidence="2">Glutathione synthase</fullName>
        </alternativeName>
    </domain>
</protein>
<dbReference type="EC" id="6.3.2.2" evidence="2"/>
<dbReference type="EC" id="6.3.2.3" evidence="2"/>
<dbReference type="EMBL" id="BA000016">
    <property type="protein sequence ID" value="BAB81279.1"/>
    <property type="molecule type" value="Genomic_DNA"/>
</dbReference>
<dbReference type="RefSeq" id="WP_011010516.1">
    <property type="nucleotide sequence ID" value="NC_003366.1"/>
</dbReference>
<dbReference type="SMR" id="Q8XK30"/>
<dbReference type="STRING" id="195102.gene:10490837"/>
<dbReference type="KEGG" id="cpe:CPE1573"/>
<dbReference type="HOGENOM" id="CLU_020728_1_0_9"/>
<dbReference type="UniPathway" id="UPA00142">
    <property type="reaction ID" value="UER00209"/>
</dbReference>
<dbReference type="UniPathway" id="UPA00142">
    <property type="reaction ID" value="UER00210"/>
</dbReference>
<dbReference type="Proteomes" id="UP000000818">
    <property type="component" value="Chromosome"/>
</dbReference>
<dbReference type="GO" id="GO:0005829">
    <property type="term" value="C:cytosol"/>
    <property type="evidence" value="ECO:0007669"/>
    <property type="project" value="TreeGrafter"/>
</dbReference>
<dbReference type="GO" id="GO:0005524">
    <property type="term" value="F:ATP binding"/>
    <property type="evidence" value="ECO:0007669"/>
    <property type="project" value="UniProtKB-UniRule"/>
</dbReference>
<dbReference type="GO" id="GO:0004357">
    <property type="term" value="F:glutamate-cysteine ligase activity"/>
    <property type="evidence" value="ECO:0007669"/>
    <property type="project" value="UniProtKB-UniRule"/>
</dbReference>
<dbReference type="GO" id="GO:0004363">
    <property type="term" value="F:glutathione synthase activity"/>
    <property type="evidence" value="ECO:0007669"/>
    <property type="project" value="UniProtKB-UniRule"/>
</dbReference>
<dbReference type="GO" id="GO:0046872">
    <property type="term" value="F:metal ion binding"/>
    <property type="evidence" value="ECO:0007669"/>
    <property type="project" value="UniProtKB-KW"/>
</dbReference>
<dbReference type="Gene3D" id="3.30.590.20">
    <property type="match status" value="1"/>
</dbReference>
<dbReference type="Gene3D" id="3.30.1490.20">
    <property type="entry name" value="ATP-grasp fold, A domain"/>
    <property type="match status" value="1"/>
</dbReference>
<dbReference type="Gene3D" id="3.30.470.20">
    <property type="entry name" value="ATP-grasp fold, B domain"/>
    <property type="match status" value="2"/>
</dbReference>
<dbReference type="HAMAP" id="MF_00782">
    <property type="entry name" value="Glut_biosynth"/>
    <property type="match status" value="1"/>
</dbReference>
<dbReference type="InterPro" id="IPR011761">
    <property type="entry name" value="ATP-grasp"/>
</dbReference>
<dbReference type="InterPro" id="IPR013815">
    <property type="entry name" value="ATP_grasp_subdomain_1"/>
</dbReference>
<dbReference type="InterPro" id="IPR014746">
    <property type="entry name" value="Gln_synth/guanido_kin_cat_dom"/>
</dbReference>
<dbReference type="InterPro" id="IPR007370">
    <property type="entry name" value="Glu_cys_ligase"/>
</dbReference>
<dbReference type="InterPro" id="IPR006335">
    <property type="entry name" value="Glut_biosynth"/>
</dbReference>
<dbReference type="InterPro" id="IPR006334">
    <property type="entry name" value="Glut_cys_ligase"/>
</dbReference>
<dbReference type="InterPro" id="IPR040657">
    <property type="entry name" value="GshAB_ATP-grasp"/>
</dbReference>
<dbReference type="NCBIfam" id="TIGR01435">
    <property type="entry name" value="glu_cys_lig_rel"/>
    <property type="match status" value="1"/>
</dbReference>
<dbReference type="NCBIfam" id="NF002688">
    <property type="entry name" value="PRK02471.1"/>
    <property type="match status" value="1"/>
</dbReference>
<dbReference type="PANTHER" id="PTHR38761">
    <property type="entry name" value="GLUTAMATE--CYSTEINE LIGASE"/>
    <property type="match status" value="1"/>
</dbReference>
<dbReference type="PANTHER" id="PTHR38761:SF1">
    <property type="entry name" value="GLUTAMATE--CYSTEINE LIGASE"/>
    <property type="match status" value="1"/>
</dbReference>
<dbReference type="Pfam" id="PF18419">
    <property type="entry name" value="ATP-grasp_6"/>
    <property type="match status" value="1"/>
</dbReference>
<dbReference type="Pfam" id="PF04262">
    <property type="entry name" value="Glu_cys_ligase"/>
    <property type="match status" value="1"/>
</dbReference>
<dbReference type="SUPFAM" id="SSF55931">
    <property type="entry name" value="Glutamine synthetase/guanido kinase"/>
    <property type="match status" value="1"/>
</dbReference>
<dbReference type="SUPFAM" id="SSF56059">
    <property type="entry name" value="Glutathione synthetase ATP-binding domain-like"/>
    <property type="match status" value="1"/>
</dbReference>
<dbReference type="PROSITE" id="PS50975">
    <property type="entry name" value="ATP_GRASP"/>
    <property type="match status" value="1"/>
</dbReference>
<name>GSHAB_CLOPE</name>
<accession>Q8XK30</accession>
<organism>
    <name type="scientific">Clostridium perfringens (strain 13 / Type A)</name>
    <dbReference type="NCBI Taxonomy" id="195102"/>
    <lineage>
        <taxon>Bacteria</taxon>
        <taxon>Bacillati</taxon>
        <taxon>Bacillota</taxon>
        <taxon>Clostridia</taxon>
        <taxon>Eubacteriales</taxon>
        <taxon>Clostridiaceae</taxon>
        <taxon>Clostridium</taxon>
    </lineage>
</organism>
<feature type="chain" id="PRO_0000192549" description="Glutathione biosynthesis bifunctional protein GshAB">
    <location>
        <begin position="1"/>
        <end position="778"/>
    </location>
</feature>
<feature type="domain" description="ATP-grasp" evidence="2">
    <location>
        <begin position="521"/>
        <end position="777"/>
    </location>
</feature>
<feature type="region of interest" description="Glutamate--cysteine ligase">
    <location>
        <begin position="1"/>
        <end position="354"/>
    </location>
</feature>
<feature type="binding site" evidence="2">
    <location>
        <begin position="548"/>
        <end position="606"/>
    </location>
    <ligand>
        <name>ATP</name>
        <dbReference type="ChEBI" id="CHEBI:30616"/>
    </ligand>
</feature>
<feature type="binding site" evidence="2">
    <location>
        <position position="728"/>
    </location>
    <ligand>
        <name>Mg(2+)</name>
        <dbReference type="ChEBI" id="CHEBI:18420"/>
        <label>1</label>
    </ligand>
</feature>
<feature type="binding site" evidence="2">
    <location>
        <position position="728"/>
    </location>
    <ligand>
        <name>Mn(2+)</name>
        <dbReference type="ChEBI" id="CHEBI:29035"/>
        <label>1</label>
    </ligand>
</feature>
<feature type="binding site" evidence="2">
    <location>
        <position position="747"/>
    </location>
    <ligand>
        <name>Mg(2+)</name>
        <dbReference type="ChEBI" id="CHEBI:18420"/>
        <label>1</label>
    </ligand>
</feature>
<feature type="binding site" evidence="2">
    <location>
        <position position="747"/>
    </location>
    <ligand>
        <name>Mg(2+)</name>
        <dbReference type="ChEBI" id="CHEBI:18420"/>
        <label>2</label>
    </ligand>
</feature>
<feature type="binding site" evidence="2">
    <location>
        <position position="747"/>
    </location>
    <ligand>
        <name>Mn(2+)</name>
        <dbReference type="ChEBI" id="CHEBI:29035"/>
        <label>1</label>
    </ligand>
</feature>
<feature type="binding site" evidence="2">
    <location>
        <position position="747"/>
    </location>
    <ligand>
        <name>Mn(2+)</name>
        <dbReference type="ChEBI" id="CHEBI:29035"/>
        <label>2</label>
    </ligand>
</feature>
<feature type="binding site" evidence="2">
    <location>
        <position position="749"/>
    </location>
    <ligand>
        <name>Mg(2+)</name>
        <dbReference type="ChEBI" id="CHEBI:18420"/>
        <label>2</label>
    </ligand>
</feature>
<feature type="binding site" evidence="2">
    <location>
        <position position="749"/>
    </location>
    <ligand>
        <name>Mn(2+)</name>
        <dbReference type="ChEBI" id="CHEBI:29035"/>
        <label>2</label>
    </ligand>
</feature>
<keyword id="KW-0067">ATP-binding</keyword>
<keyword id="KW-0317">Glutathione biosynthesis</keyword>
<keyword id="KW-0436">Ligase</keyword>
<keyword id="KW-0460">Magnesium</keyword>
<keyword id="KW-0464">Manganese</keyword>
<keyword id="KW-0479">Metal-binding</keyword>
<keyword id="KW-0511">Multifunctional enzyme</keyword>
<keyword id="KW-0547">Nucleotide-binding</keyword>
<keyword id="KW-1185">Reference proteome</keyword>
<proteinExistence type="inferred from homology"/>
<evidence type="ECO:0000250" key="1"/>
<evidence type="ECO:0000255" key="2">
    <source>
        <dbReference type="HAMAP-Rule" id="MF_00782"/>
    </source>
</evidence>
<sequence>MVNLDKGLLKIIKDESLEDYFIKANFGLEKENVRVTESGNLALTPHPKAFGDREKNAYIKTDFSESQLEMVTPVCNTLEEVYSFICNLNKVVSLEIMKNGEFLWPQSNPPILPREEEIPIAKLSNREDELYRENLSYKYGKKKQVISGIHYNFSFKEEFIKLLYKELKVEKDFREFKDDIYLRMARNFQKYHWLLIYLTGASPVFHESYIEEIKEEGEKLGEDSYYIKDDTSLRNSSYGYKNKKDYYVSYNSIEEYASDIKNLVKDKEIQSIKEYYNPIRLKSLGSEDMLESLLHKGIDYLEVRLLDLDPLSIQGVSKETLYLLHLFMIYTLLKENKEITYKDQEEFFKNHDMVALKGRNEEAVIYENGVPVLLKDKGREILSEMDEIVEILFSNNEEFKNVIKRALEKINNPHDTISEKLIKDIKEEGYINFHMRLAKEYLNNFKNKEFNLVGYEDLELSTQILILDAIKRGIEFNIMDRLENFISLSDGEKVEYVKQATKTSKDSYITALIMENKLVTKDILRENNIRVPKGKDYDNIDEAKKDFRLFKDEKIVIKPKSTNFGLGISIFPGEYSREDYDKAVEIAFREDSSILIEEFMTGKEYRFLVIGEEVVGILHREPANVIGNGESTIEELVSEKNKDPLRGKGYKTPLEKIKLGEIEEMFLKNQGLSFKSIPKNGEKIYLRENSNISTGGDSIDFTDKIHPSYKEVALKSAKAVKALICGVDMVIDNIEEEAKEKNHGIIELNFNPAIHIHCFPYKGENRKAGEKILDLLFN</sequence>
<gene>
    <name evidence="2" type="primary">gshAB</name>
    <name evidence="2" type="synonym">gshF</name>
    <name type="ordered locus">CPE1573</name>
</gene>